<protein>
    <recommendedName>
        <fullName>Serine/threonine exchanger SteT</fullName>
    </recommendedName>
</protein>
<accession>O34739</accession>
<accession>Q7B3R0</accession>
<evidence type="ECO:0000255" key="1"/>
<evidence type="ECO:0000269" key="2">
    <source>
    </source>
</evidence>
<evidence type="ECO:0000305" key="3"/>
<proteinExistence type="evidence at protein level"/>
<gene>
    <name type="primary">steT</name>
    <name type="synonym">ykbA</name>
    <name type="ordered locus">BSU12860</name>
</gene>
<reference key="1">
    <citation type="submission" date="1997-11" db="EMBL/GenBank/DDBJ databases">
        <title>Sequence of the Bacillus subtilis genome between xlyA and ykoR.</title>
        <authorList>
            <person name="Devine K.M."/>
        </authorList>
    </citation>
    <scope>NUCLEOTIDE SEQUENCE [GENOMIC DNA]</scope>
    <source>
        <strain>168</strain>
    </source>
</reference>
<reference key="2">
    <citation type="journal article" date="1997" name="Nature">
        <title>The complete genome sequence of the Gram-positive bacterium Bacillus subtilis.</title>
        <authorList>
            <person name="Kunst F."/>
            <person name="Ogasawara N."/>
            <person name="Moszer I."/>
            <person name="Albertini A.M."/>
            <person name="Alloni G."/>
            <person name="Azevedo V."/>
            <person name="Bertero M.G."/>
            <person name="Bessieres P."/>
            <person name="Bolotin A."/>
            <person name="Borchert S."/>
            <person name="Borriss R."/>
            <person name="Boursier L."/>
            <person name="Brans A."/>
            <person name="Braun M."/>
            <person name="Brignell S.C."/>
            <person name="Bron S."/>
            <person name="Brouillet S."/>
            <person name="Bruschi C.V."/>
            <person name="Caldwell B."/>
            <person name="Capuano V."/>
            <person name="Carter N.M."/>
            <person name="Choi S.-K."/>
            <person name="Codani J.-J."/>
            <person name="Connerton I.F."/>
            <person name="Cummings N.J."/>
            <person name="Daniel R.A."/>
            <person name="Denizot F."/>
            <person name="Devine K.M."/>
            <person name="Duesterhoeft A."/>
            <person name="Ehrlich S.D."/>
            <person name="Emmerson P.T."/>
            <person name="Entian K.-D."/>
            <person name="Errington J."/>
            <person name="Fabret C."/>
            <person name="Ferrari E."/>
            <person name="Foulger D."/>
            <person name="Fritz C."/>
            <person name="Fujita M."/>
            <person name="Fujita Y."/>
            <person name="Fuma S."/>
            <person name="Galizzi A."/>
            <person name="Galleron N."/>
            <person name="Ghim S.-Y."/>
            <person name="Glaser P."/>
            <person name="Goffeau A."/>
            <person name="Golightly E.J."/>
            <person name="Grandi G."/>
            <person name="Guiseppi G."/>
            <person name="Guy B.J."/>
            <person name="Haga K."/>
            <person name="Haiech J."/>
            <person name="Harwood C.R."/>
            <person name="Henaut A."/>
            <person name="Hilbert H."/>
            <person name="Holsappel S."/>
            <person name="Hosono S."/>
            <person name="Hullo M.-F."/>
            <person name="Itaya M."/>
            <person name="Jones L.-M."/>
            <person name="Joris B."/>
            <person name="Karamata D."/>
            <person name="Kasahara Y."/>
            <person name="Klaerr-Blanchard M."/>
            <person name="Klein C."/>
            <person name="Kobayashi Y."/>
            <person name="Koetter P."/>
            <person name="Koningstein G."/>
            <person name="Krogh S."/>
            <person name="Kumano M."/>
            <person name="Kurita K."/>
            <person name="Lapidus A."/>
            <person name="Lardinois S."/>
            <person name="Lauber J."/>
            <person name="Lazarevic V."/>
            <person name="Lee S.-M."/>
            <person name="Levine A."/>
            <person name="Liu H."/>
            <person name="Masuda S."/>
            <person name="Mauel C."/>
            <person name="Medigue C."/>
            <person name="Medina N."/>
            <person name="Mellado R.P."/>
            <person name="Mizuno M."/>
            <person name="Moestl D."/>
            <person name="Nakai S."/>
            <person name="Noback M."/>
            <person name="Noone D."/>
            <person name="O'Reilly M."/>
            <person name="Ogawa K."/>
            <person name="Ogiwara A."/>
            <person name="Oudega B."/>
            <person name="Park S.-H."/>
            <person name="Parro V."/>
            <person name="Pohl T.M."/>
            <person name="Portetelle D."/>
            <person name="Porwollik S."/>
            <person name="Prescott A.M."/>
            <person name="Presecan E."/>
            <person name="Pujic P."/>
            <person name="Purnelle B."/>
            <person name="Rapoport G."/>
            <person name="Rey M."/>
            <person name="Reynolds S."/>
            <person name="Rieger M."/>
            <person name="Rivolta C."/>
            <person name="Rocha E."/>
            <person name="Roche B."/>
            <person name="Rose M."/>
            <person name="Sadaie Y."/>
            <person name="Sato T."/>
            <person name="Scanlan E."/>
            <person name="Schleich S."/>
            <person name="Schroeter R."/>
            <person name="Scoffone F."/>
            <person name="Sekiguchi J."/>
            <person name="Sekowska A."/>
            <person name="Seror S.J."/>
            <person name="Serror P."/>
            <person name="Shin B.-S."/>
            <person name="Soldo B."/>
            <person name="Sorokin A."/>
            <person name="Tacconi E."/>
            <person name="Takagi T."/>
            <person name="Takahashi H."/>
            <person name="Takemaru K."/>
            <person name="Takeuchi M."/>
            <person name="Tamakoshi A."/>
            <person name="Tanaka T."/>
            <person name="Terpstra P."/>
            <person name="Tognoni A."/>
            <person name="Tosato V."/>
            <person name="Uchiyama S."/>
            <person name="Vandenbol M."/>
            <person name="Vannier F."/>
            <person name="Vassarotti A."/>
            <person name="Viari A."/>
            <person name="Wambutt R."/>
            <person name="Wedler E."/>
            <person name="Wedler H."/>
            <person name="Weitzenegger T."/>
            <person name="Winters P."/>
            <person name="Wipat A."/>
            <person name="Yamamoto H."/>
            <person name="Yamane K."/>
            <person name="Yasumoto K."/>
            <person name="Yata K."/>
            <person name="Yoshida K."/>
            <person name="Yoshikawa H.-F."/>
            <person name="Zumstein E."/>
            <person name="Yoshikawa H."/>
            <person name="Danchin A."/>
        </authorList>
    </citation>
    <scope>NUCLEOTIDE SEQUENCE [LARGE SCALE GENOMIC DNA]</scope>
    <source>
        <strain>168</strain>
    </source>
</reference>
<reference key="3">
    <citation type="journal article" date="2007" name="J. Biol. Chem.">
        <title>Functional and structural characterization of the first prokaryotic member of the L-amino acid transporter (LAT) family: a model for APC transporters.</title>
        <authorList>
            <person name="Reig N."/>
            <person name="del Rio C."/>
            <person name="Casagrande F."/>
            <person name="Ratera M."/>
            <person name="Gelpi J.L."/>
            <person name="Torrents D."/>
            <person name="Henderson P.J.F."/>
            <person name="Xie H."/>
            <person name="Baldwin S.A."/>
            <person name="Zorzano A."/>
            <person name="Fotiadis D."/>
            <person name="Palacin M."/>
        </authorList>
    </citation>
    <scope>FUNCTION AS A TRANSPORTER</scope>
    <scope>SUBUNIT</scope>
    <scope>MUTAGENESIS OF CYS-94; CYS-141; CYS-168; CYS-291 AND CYS-415</scope>
</reference>
<feature type="chain" id="PRO_0000376828" description="Serine/threonine exchanger SteT">
    <location>
        <begin position="1"/>
        <end position="438"/>
    </location>
</feature>
<feature type="topological domain" description="Cytoplasmic" evidence="1">
    <location>
        <begin position="1"/>
        <end position="11"/>
    </location>
</feature>
<feature type="transmembrane region" description="Helical" evidence="1">
    <location>
        <begin position="12"/>
        <end position="32"/>
    </location>
</feature>
<feature type="topological domain" description="Extracellular" evidence="1">
    <location>
        <begin position="33"/>
        <end position="45"/>
    </location>
</feature>
<feature type="transmembrane region" description="Helical" evidence="1">
    <location>
        <begin position="46"/>
        <end position="66"/>
    </location>
</feature>
<feature type="topological domain" description="Cytoplasmic" evidence="1">
    <location>
        <begin position="67"/>
        <end position="98"/>
    </location>
</feature>
<feature type="transmembrane region" description="Helical" evidence="1">
    <location>
        <begin position="99"/>
        <end position="119"/>
    </location>
</feature>
<feature type="topological domain" description="Extracellular" evidence="1">
    <location>
        <begin position="120"/>
        <end position="126"/>
    </location>
</feature>
<feature type="transmembrane region" description="Helical" evidence="1">
    <location>
        <begin position="127"/>
        <end position="147"/>
    </location>
</feature>
<feature type="topological domain" description="Cytoplasmic" evidence="1">
    <location>
        <begin position="148"/>
        <end position="151"/>
    </location>
</feature>
<feature type="transmembrane region" description="Helical" evidence="1">
    <location>
        <begin position="152"/>
        <end position="172"/>
    </location>
</feature>
<feature type="topological domain" description="Extracellular" evidence="1">
    <location>
        <begin position="173"/>
        <end position="193"/>
    </location>
</feature>
<feature type="transmembrane region" description="Helical" evidence="1">
    <location>
        <begin position="194"/>
        <end position="214"/>
    </location>
</feature>
<feature type="topological domain" description="Cytoplasmic" evidence="1">
    <location>
        <begin position="215"/>
        <end position="230"/>
    </location>
</feature>
<feature type="transmembrane region" description="Helical" evidence="1">
    <location>
        <begin position="231"/>
        <end position="251"/>
    </location>
</feature>
<feature type="topological domain" description="Extracellular" evidence="1">
    <location>
        <begin position="252"/>
        <end position="269"/>
    </location>
</feature>
<feature type="transmembrane region" description="Helical" evidence="1">
    <location>
        <begin position="270"/>
        <end position="290"/>
    </location>
</feature>
<feature type="topological domain" description="Cytoplasmic" evidence="1">
    <location>
        <begin position="291"/>
        <end position="327"/>
    </location>
</feature>
<feature type="transmembrane region" description="Helical" evidence="1">
    <location>
        <begin position="328"/>
        <end position="348"/>
    </location>
</feature>
<feature type="topological domain" description="Extracellular" evidence="1">
    <location>
        <begin position="349"/>
        <end position="352"/>
    </location>
</feature>
<feature type="transmembrane region" description="Helical" evidence="1">
    <location>
        <begin position="353"/>
        <end position="373"/>
    </location>
</feature>
<feature type="topological domain" description="Cytoplasmic" evidence="1">
    <location>
        <begin position="374"/>
        <end position="388"/>
    </location>
</feature>
<feature type="transmembrane region" description="Helical" evidence="1">
    <location>
        <begin position="389"/>
        <end position="409"/>
    </location>
</feature>
<feature type="topological domain" description="Extracellular" evidence="1">
    <location>
        <begin position="410"/>
        <end position="411"/>
    </location>
</feature>
<feature type="transmembrane region" description="Helical" evidence="1">
    <location>
        <begin position="412"/>
        <end position="432"/>
    </location>
</feature>
<feature type="topological domain" description="Cytoplasmic" evidence="1">
    <location>
        <begin position="433"/>
        <end position="438"/>
    </location>
</feature>
<feature type="mutagenesis site" description="Retains 25% of the transport activity; when associated with S-141; S-168; S-291 and S-415." evidence="2">
    <original>C</original>
    <variation>S</variation>
    <location>
        <position position="94"/>
    </location>
</feature>
<feature type="mutagenesis site" description="Retains 25% of the transport activity; when associated with S-94; S-168; S-291 and S-415." evidence="2">
    <original>C</original>
    <variation>S</variation>
    <location>
        <position position="141"/>
    </location>
</feature>
<feature type="mutagenesis site" description="Retains 25% of the transport activity; when associated with S-94; S-141; S-291 and S-415." evidence="2">
    <original>C</original>
    <variation>S</variation>
    <location>
        <position position="168"/>
    </location>
</feature>
<feature type="mutagenesis site" description="Retains 25% of the transport activity; when associated with S-94; S-141; S-168 and S-415." evidence="2">
    <original>C</original>
    <variation>S</variation>
    <location>
        <position position="291"/>
    </location>
</feature>
<feature type="mutagenesis site" description="Retains 25% of the transport activity; when associated with S-94; S-141; S-168 and S-291." evidence="2">
    <original>C</original>
    <variation>S</variation>
    <location>
        <position position="415"/>
    </location>
</feature>
<keyword id="KW-0029">Amino-acid transport</keyword>
<keyword id="KW-1003">Cell membrane</keyword>
<keyword id="KW-0472">Membrane</keyword>
<keyword id="KW-1185">Reference proteome</keyword>
<keyword id="KW-0812">Transmembrane</keyword>
<keyword id="KW-1133">Transmembrane helix</keyword>
<keyword id="KW-0813">Transport</keyword>
<sequence length="438" mass="47148">MHTEDNGLKKEIGLLFALTLVIGTIIGSGVFMKPGAVLAYSGDSKMALFAWLLGGILTLAGGLTIAEIGTQIPKTGGLYTYLEEVYGEFWGFLCGWVQIIIYGPAIIGALGLYFGSLMANLFGWGSGLSKVIGIIAVLFLCVINIIGTKYGGFVQTLTTIGKLIPIACIIVFGLWKGDQHIFTAVNESISDMNFGAAILATLFAYDGWILLAALGGEMKNPEKLLPRAMTGGLLIVTAIYIFINFALLHILSANEIVTLGENATSTAATMLFGSIGGKLISVGIIVSIFGCLNGKVLSFPRVSFAMAERKQLPFAEKLSHVHPSFRTPWIAISFQIALALIMMLISNPDKLSEISIFMIYIFYVMAFFAVFILRKRAKGEKRAYSVPLYPFMPILAIAGSFFVLGSTLITDTMSCGLSILIGLAGLPVYYGMKKRKAS</sequence>
<dbReference type="EMBL" id="AJ002571">
    <property type="protein sequence ID" value="CAA05566.1"/>
    <property type="molecule type" value="Genomic_DNA"/>
</dbReference>
<dbReference type="EMBL" id="AL009126">
    <property type="protein sequence ID" value="CAB13143.1"/>
    <property type="molecule type" value="Genomic_DNA"/>
</dbReference>
<dbReference type="PIR" id="B69855">
    <property type="entry name" value="B69855"/>
</dbReference>
<dbReference type="RefSeq" id="NP_389169.1">
    <property type="nucleotide sequence ID" value="NC_000964.3"/>
</dbReference>
<dbReference type="RefSeq" id="WP_003244819.1">
    <property type="nucleotide sequence ID" value="NZ_OZ025638.1"/>
</dbReference>
<dbReference type="SMR" id="O34739"/>
<dbReference type="FunCoup" id="O34739">
    <property type="interactions" value="345"/>
</dbReference>
<dbReference type="STRING" id="224308.BSU12860"/>
<dbReference type="TCDB" id="2.A.3.8.12">
    <property type="family name" value="the amino acid-polyamine-organocation (apc) family"/>
</dbReference>
<dbReference type="PaxDb" id="224308-BSU12860"/>
<dbReference type="EnsemblBacteria" id="CAB13143">
    <property type="protein sequence ID" value="CAB13143"/>
    <property type="gene ID" value="BSU_12860"/>
</dbReference>
<dbReference type="GeneID" id="936518"/>
<dbReference type="KEGG" id="bsu:BSU12860"/>
<dbReference type="PATRIC" id="fig|224308.179.peg.1395"/>
<dbReference type="eggNOG" id="COG0531">
    <property type="taxonomic scope" value="Bacteria"/>
</dbReference>
<dbReference type="InParanoid" id="O34739"/>
<dbReference type="OrthoDB" id="3181223at2"/>
<dbReference type="PhylomeDB" id="O34739"/>
<dbReference type="BioCyc" id="BSUB:BSU12860-MONOMER"/>
<dbReference type="Proteomes" id="UP000001570">
    <property type="component" value="Chromosome"/>
</dbReference>
<dbReference type="GO" id="GO:0005886">
    <property type="term" value="C:plasma membrane"/>
    <property type="evidence" value="ECO:0007669"/>
    <property type="project" value="UniProtKB-SubCell"/>
</dbReference>
<dbReference type="GO" id="GO:0015179">
    <property type="term" value="F:L-amino acid transmembrane transporter activity"/>
    <property type="evidence" value="ECO:0000318"/>
    <property type="project" value="GO_Central"/>
</dbReference>
<dbReference type="GO" id="GO:0003333">
    <property type="term" value="P:amino acid transmembrane transport"/>
    <property type="evidence" value="ECO:0000318"/>
    <property type="project" value="GO_Central"/>
</dbReference>
<dbReference type="FunFam" id="1.20.1740.10:FF:000051">
    <property type="entry name" value="Amino acid permease"/>
    <property type="match status" value="1"/>
</dbReference>
<dbReference type="Gene3D" id="1.20.1740.10">
    <property type="entry name" value="Amino acid/polyamine transporter I"/>
    <property type="match status" value="1"/>
</dbReference>
<dbReference type="InterPro" id="IPR002293">
    <property type="entry name" value="AA/rel_permease1"/>
</dbReference>
<dbReference type="InterPro" id="IPR050598">
    <property type="entry name" value="AminoAcid_Transporter"/>
</dbReference>
<dbReference type="PANTHER" id="PTHR11785">
    <property type="entry name" value="AMINO ACID TRANSPORTER"/>
    <property type="match status" value="1"/>
</dbReference>
<dbReference type="PANTHER" id="PTHR11785:SF512">
    <property type="entry name" value="SOBREMESA, ISOFORM B"/>
    <property type="match status" value="1"/>
</dbReference>
<dbReference type="Pfam" id="PF13520">
    <property type="entry name" value="AA_permease_2"/>
    <property type="match status" value="1"/>
</dbReference>
<dbReference type="PIRSF" id="PIRSF006060">
    <property type="entry name" value="AA_transporter"/>
    <property type="match status" value="1"/>
</dbReference>
<comment type="function">
    <text evidence="2">Exhibits an obligate exchange activity for serine, threonine and aromatic amino acids.</text>
</comment>
<comment type="subunit">
    <text evidence="2">Monomer.</text>
</comment>
<comment type="subcellular location">
    <subcellularLocation>
        <location evidence="3">Cell membrane</location>
        <topology evidence="3">Multi-pass membrane protein</topology>
    </subcellularLocation>
</comment>
<comment type="similarity">
    <text evidence="3">Belongs to the amino acid-polyamine-organocation (APC) superfamily. L-type amino acid transporter (LAT) (TC 2.A.3.8) family.</text>
</comment>
<organism>
    <name type="scientific">Bacillus subtilis (strain 168)</name>
    <dbReference type="NCBI Taxonomy" id="224308"/>
    <lineage>
        <taxon>Bacteria</taxon>
        <taxon>Bacillati</taxon>
        <taxon>Bacillota</taxon>
        <taxon>Bacilli</taxon>
        <taxon>Bacillales</taxon>
        <taxon>Bacillaceae</taxon>
        <taxon>Bacillus</taxon>
    </lineage>
</organism>
<name>STET_BACSU</name>